<reference key="1">
    <citation type="journal article" date="2006" name="Science">
        <title>Genome of rice cluster I archaea -- the key methane producers in the rice rhizosphere.</title>
        <authorList>
            <person name="Erkel C."/>
            <person name="Kube M."/>
            <person name="Reinhardt R."/>
            <person name="Liesack W."/>
        </authorList>
    </citation>
    <scope>NUCLEOTIDE SEQUENCE [LARGE SCALE GENOMIC DNA]</scope>
    <source>
        <strain>DSM 22066 / NBRC 105507 / MRE50</strain>
    </source>
</reference>
<sequence length="188" mass="20391">MDRVPREEFVPEDVRPDAYYDTPLPIGHNQTISAPSMVAIMCQALDIREGNKVLEIGTGLGYHAAVMAVLAGASGVVYTVERIPELADMARSVLSRLGFDNVKVFLRDGTEGLPDFAPYDRISVAAAAPDVPQPLVDQLKDPGRLVIPVGRYFQQLMLVEKKGGQIITTDKGGVAFVPLLGKYGFKGY</sequence>
<feature type="chain" id="PRO_0000351974" description="Protein-L-isoaspartate O-methyltransferase">
    <location>
        <begin position="1"/>
        <end position="188"/>
    </location>
</feature>
<feature type="active site" evidence="1">
    <location>
        <position position="33"/>
    </location>
</feature>
<evidence type="ECO:0000255" key="1">
    <source>
        <dbReference type="HAMAP-Rule" id="MF_00090"/>
    </source>
</evidence>
<comment type="function">
    <text evidence="1">Catalyzes the methyl esterification of L-isoaspartyl residues in peptides and proteins that result from spontaneous decomposition of normal L-aspartyl and L-asparaginyl residues. It plays a role in the repair and/or degradation of damaged proteins.</text>
</comment>
<comment type="catalytic activity">
    <reaction evidence="1">
        <text>[protein]-L-isoaspartate + S-adenosyl-L-methionine = [protein]-L-isoaspartate alpha-methyl ester + S-adenosyl-L-homocysteine</text>
        <dbReference type="Rhea" id="RHEA:12705"/>
        <dbReference type="Rhea" id="RHEA-COMP:12143"/>
        <dbReference type="Rhea" id="RHEA-COMP:12144"/>
        <dbReference type="ChEBI" id="CHEBI:57856"/>
        <dbReference type="ChEBI" id="CHEBI:59789"/>
        <dbReference type="ChEBI" id="CHEBI:90596"/>
        <dbReference type="ChEBI" id="CHEBI:90598"/>
        <dbReference type="EC" id="2.1.1.77"/>
    </reaction>
</comment>
<comment type="subcellular location">
    <subcellularLocation>
        <location evidence="1">Cytoplasm</location>
    </subcellularLocation>
</comment>
<comment type="similarity">
    <text evidence="1">Belongs to the methyltransferase superfamily. L-isoaspartyl/D-aspartyl protein methyltransferase family.</text>
</comment>
<organism>
    <name type="scientific">Methanocella arvoryzae (strain DSM 22066 / NBRC 105507 / MRE50)</name>
    <dbReference type="NCBI Taxonomy" id="351160"/>
    <lineage>
        <taxon>Archaea</taxon>
        <taxon>Methanobacteriati</taxon>
        <taxon>Methanobacteriota</taxon>
        <taxon>Stenosarchaea group</taxon>
        <taxon>Methanomicrobia</taxon>
        <taxon>Methanocellales</taxon>
        <taxon>Methanocellaceae</taxon>
        <taxon>Methanocella</taxon>
    </lineage>
</organism>
<name>PIMT_METAR</name>
<dbReference type="EC" id="2.1.1.77" evidence="1"/>
<dbReference type="EMBL" id="AM114193">
    <property type="protein sequence ID" value="CAJ37283.1"/>
    <property type="molecule type" value="Genomic_DNA"/>
</dbReference>
<dbReference type="SMR" id="Q0W2W0"/>
<dbReference type="STRING" id="351160.RCIX2158"/>
<dbReference type="KEGG" id="rci:RCIX2158"/>
<dbReference type="PATRIC" id="fig|351160.9.peg.999"/>
<dbReference type="eggNOG" id="arCOG00976">
    <property type="taxonomic scope" value="Archaea"/>
</dbReference>
<dbReference type="Proteomes" id="UP000000663">
    <property type="component" value="Chromosome"/>
</dbReference>
<dbReference type="GO" id="GO:0005737">
    <property type="term" value="C:cytoplasm"/>
    <property type="evidence" value="ECO:0007669"/>
    <property type="project" value="UniProtKB-SubCell"/>
</dbReference>
<dbReference type="GO" id="GO:0004719">
    <property type="term" value="F:protein-L-isoaspartate (D-aspartate) O-methyltransferase activity"/>
    <property type="evidence" value="ECO:0007669"/>
    <property type="project" value="UniProtKB-UniRule"/>
</dbReference>
<dbReference type="GO" id="GO:0032259">
    <property type="term" value="P:methylation"/>
    <property type="evidence" value="ECO:0007669"/>
    <property type="project" value="UniProtKB-KW"/>
</dbReference>
<dbReference type="GO" id="GO:0036211">
    <property type="term" value="P:protein modification process"/>
    <property type="evidence" value="ECO:0007669"/>
    <property type="project" value="UniProtKB-UniRule"/>
</dbReference>
<dbReference type="GO" id="GO:0030091">
    <property type="term" value="P:protein repair"/>
    <property type="evidence" value="ECO:0007669"/>
    <property type="project" value="UniProtKB-UniRule"/>
</dbReference>
<dbReference type="CDD" id="cd02440">
    <property type="entry name" value="AdoMet_MTases"/>
    <property type="match status" value="1"/>
</dbReference>
<dbReference type="FunFam" id="3.40.50.150:FF:000010">
    <property type="entry name" value="Protein-L-isoaspartate O-methyltransferase"/>
    <property type="match status" value="1"/>
</dbReference>
<dbReference type="Gene3D" id="3.40.50.150">
    <property type="entry name" value="Vaccinia Virus protein VP39"/>
    <property type="match status" value="1"/>
</dbReference>
<dbReference type="HAMAP" id="MF_00090">
    <property type="entry name" value="PIMT"/>
    <property type="match status" value="1"/>
</dbReference>
<dbReference type="InterPro" id="IPR000682">
    <property type="entry name" value="PCMT"/>
</dbReference>
<dbReference type="InterPro" id="IPR029063">
    <property type="entry name" value="SAM-dependent_MTases_sf"/>
</dbReference>
<dbReference type="NCBIfam" id="TIGR00080">
    <property type="entry name" value="pimt"/>
    <property type="match status" value="1"/>
</dbReference>
<dbReference type="NCBIfam" id="NF001453">
    <property type="entry name" value="PRK00312.1"/>
    <property type="match status" value="1"/>
</dbReference>
<dbReference type="NCBIfam" id="NF010549">
    <property type="entry name" value="PRK13942.1"/>
    <property type="match status" value="1"/>
</dbReference>
<dbReference type="PANTHER" id="PTHR11579">
    <property type="entry name" value="PROTEIN-L-ISOASPARTATE O-METHYLTRANSFERASE"/>
    <property type="match status" value="1"/>
</dbReference>
<dbReference type="PANTHER" id="PTHR11579:SF0">
    <property type="entry name" value="PROTEIN-L-ISOASPARTATE(D-ASPARTATE) O-METHYLTRANSFERASE"/>
    <property type="match status" value="1"/>
</dbReference>
<dbReference type="Pfam" id="PF01135">
    <property type="entry name" value="PCMT"/>
    <property type="match status" value="1"/>
</dbReference>
<dbReference type="SUPFAM" id="SSF53335">
    <property type="entry name" value="S-adenosyl-L-methionine-dependent methyltransferases"/>
    <property type="match status" value="1"/>
</dbReference>
<keyword id="KW-0963">Cytoplasm</keyword>
<keyword id="KW-0489">Methyltransferase</keyword>
<keyword id="KW-1185">Reference proteome</keyword>
<keyword id="KW-0949">S-adenosyl-L-methionine</keyword>
<keyword id="KW-0808">Transferase</keyword>
<proteinExistence type="inferred from homology"/>
<gene>
    <name evidence="1" type="primary">pcm</name>
    <name type="ordered locus">UNCMA_09660</name>
    <name type="ORF">RCIX2158</name>
</gene>
<accession>Q0W2W0</accession>
<protein>
    <recommendedName>
        <fullName evidence="1">Protein-L-isoaspartate O-methyltransferase</fullName>
        <ecNumber evidence="1">2.1.1.77</ecNumber>
    </recommendedName>
    <alternativeName>
        <fullName evidence="1">L-isoaspartyl protein carboxyl methyltransferase</fullName>
    </alternativeName>
    <alternativeName>
        <fullName evidence="1">Protein L-isoaspartyl methyltransferase</fullName>
    </alternativeName>
    <alternativeName>
        <fullName evidence="1">Protein-beta-aspartate methyltransferase</fullName>
        <shortName evidence="1">PIMT</shortName>
    </alternativeName>
</protein>